<proteinExistence type="inferred from homology"/>
<protein>
    <recommendedName>
        <fullName>Genetic interactor of prohibitin 7, mitochondrial</fullName>
    </recommendedName>
</protein>
<gene>
    <name type="primary">GEP7</name>
    <name type="ORF">EC1118_1G1_2366g</name>
</gene>
<evidence type="ECO:0000250" key="1"/>
<evidence type="ECO:0000255" key="2"/>
<evidence type="ECO:0000305" key="3"/>
<sequence>MVLSNVKIFRLKSHRAFRIGPMIKAVAGNLLVKRFYQPKLERIPPASLLLKQKIRLAQNGSTTSTENPISFSQTMSEIFSVLQPSAPDLDEDETSGLKRDHLLTERLNNGELGVIMNKFFNPSSTHNNQLIDTNILLQNFPKLSGNDLDLLDFAINEKMRGNWNDLKQDFIQLWYYKSFGFLGPRTQFVLTNSSPSLRSQFLKLPFIEYNWFLLQNNKNANILPADVQNVVKVFHLDDKRFSWKSIDPFSKAIISFVVFVSIYVWLDESAKQKTKELPAQKSTVISE</sequence>
<keyword id="KW-0472">Membrane</keyword>
<keyword id="KW-0496">Mitochondrion</keyword>
<keyword id="KW-0809">Transit peptide</keyword>
<keyword id="KW-0812">Transmembrane</keyword>
<keyword id="KW-1133">Transmembrane helix</keyword>
<comment type="function">
    <text evidence="1">Involved in respiratory growth and required for cell survival in the absence of prohibitins or GEM1.</text>
</comment>
<comment type="subcellular location">
    <subcellularLocation>
        <location evidence="1">Mitochondrion membrane</location>
        <topology evidence="1">Single-pass membrane protein</topology>
    </subcellularLocation>
</comment>
<comment type="similarity">
    <text evidence="3">Belongs to the GEP7 family.</text>
</comment>
<feature type="transit peptide" description="Mitochondrion" evidence="2">
    <location>
        <begin position="1"/>
        <end position="24"/>
    </location>
</feature>
<feature type="chain" id="PRO_0000399744" description="Genetic interactor of prohibitin 7, mitochondrial">
    <location>
        <begin position="25"/>
        <end position="287"/>
    </location>
</feature>
<feature type="transmembrane region" description="Helical" evidence="2">
    <location>
        <begin position="250"/>
        <end position="266"/>
    </location>
</feature>
<organism>
    <name type="scientific">Saccharomyces cerevisiae (strain Lalvin EC1118 / Prise de mousse)</name>
    <name type="common">Baker's yeast</name>
    <dbReference type="NCBI Taxonomy" id="643680"/>
    <lineage>
        <taxon>Eukaryota</taxon>
        <taxon>Fungi</taxon>
        <taxon>Dikarya</taxon>
        <taxon>Ascomycota</taxon>
        <taxon>Saccharomycotina</taxon>
        <taxon>Saccharomycetes</taxon>
        <taxon>Saccharomycetales</taxon>
        <taxon>Saccharomycetaceae</taxon>
        <taxon>Saccharomyces</taxon>
    </lineage>
</organism>
<dbReference type="EMBL" id="FN393070">
    <property type="protein sequence ID" value="CAY79706.1"/>
    <property type="molecule type" value="Genomic_DNA"/>
</dbReference>
<dbReference type="HOGENOM" id="CLU_064141_0_0_1"/>
<dbReference type="OrthoDB" id="41474at4893"/>
<dbReference type="Proteomes" id="UP000000286">
    <property type="component" value="Chromosome VII, Scaffold EC1118_1G1"/>
</dbReference>
<dbReference type="GO" id="GO:0031966">
    <property type="term" value="C:mitochondrial membrane"/>
    <property type="evidence" value="ECO:0007669"/>
    <property type="project" value="UniProtKB-SubCell"/>
</dbReference>
<name>GEP7_YEAS8</name>
<accession>C8Z8J0</accession>
<reference key="1">
    <citation type="journal article" date="2009" name="Proc. Natl. Acad. Sci. U.S.A.">
        <title>Eukaryote-to-eukaryote gene transfer events revealed by the genome sequence of the wine yeast Saccharomyces cerevisiae EC1118.</title>
        <authorList>
            <person name="Novo M."/>
            <person name="Bigey F."/>
            <person name="Beyne E."/>
            <person name="Galeote V."/>
            <person name="Gavory F."/>
            <person name="Mallet S."/>
            <person name="Cambon B."/>
            <person name="Legras J.-L."/>
            <person name="Wincker P."/>
            <person name="Casaregola S."/>
            <person name="Dequin S."/>
        </authorList>
    </citation>
    <scope>NUCLEOTIDE SEQUENCE [LARGE SCALE GENOMIC DNA]</scope>
    <source>
        <strain>Lalvin EC1118 / Prise de mousse</strain>
    </source>
</reference>